<organism>
    <name type="scientific">Mus musculus</name>
    <name type="common">Mouse</name>
    <dbReference type="NCBI Taxonomy" id="10090"/>
    <lineage>
        <taxon>Eukaryota</taxon>
        <taxon>Metazoa</taxon>
        <taxon>Chordata</taxon>
        <taxon>Craniata</taxon>
        <taxon>Vertebrata</taxon>
        <taxon>Euteleostomi</taxon>
        <taxon>Mammalia</taxon>
        <taxon>Eutheria</taxon>
        <taxon>Euarchontoglires</taxon>
        <taxon>Glires</taxon>
        <taxon>Rodentia</taxon>
        <taxon>Myomorpha</taxon>
        <taxon>Muroidea</taxon>
        <taxon>Muridae</taxon>
        <taxon>Murinae</taxon>
        <taxon>Mus</taxon>
        <taxon>Mus</taxon>
    </lineage>
</organism>
<comment type="function">
    <text evidence="4">Plays a role in cortical progenitor cell proliferation and differentiation (PubMed:27404227). Promotes dendritic spine development of post-migratory cortical projection neurons by modulating the beta-catenin signaling pathway (PubMed:27404227).</text>
</comment>
<comment type="subunit">
    <text evidence="4">Interacts with CCDC85B (PubMed:27404227).</text>
</comment>
<comment type="tissue specificity">
    <text evidence="4">Expressed in brain (at protein level) (PubMed:27404227). Expressed in neural progenitor cells and postmitotic neurons of the embryonic cerebral cortex (PubMed:27404227).</text>
</comment>
<comment type="developmental stage">
    <text evidence="4">Expressed in the embryonic cortex and germinal ventricular zone (PubMed:27404227). Expressed in cells of the cortical plate and in retinal pigment epithelium and lens between 12 and 14 dpc (at protein level) (PubMed:27404227).</text>
</comment>
<comment type="similarity">
    <text evidence="5">Belongs to the EURL family.</text>
</comment>
<keyword id="KW-0175">Coiled coil</keyword>
<keyword id="KW-0221">Differentiation</keyword>
<keyword id="KW-0524">Neurogenesis</keyword>
<keyword id="KW-1185">Reference proteome</keyword>
<sequence>MNEEEQFVSIDLNDDNICSVCKLGTDKDTLSFCHICFELNLEGVPKSNLLHTKSVRGHKDCFEKYHLIANQDCSRSKLSKSTYEGVKTIVSKKINWIVQYAQNKNLDLESECSKTSQHPLLNFRHKPEKKLLPQFDSQVPKYSAKGSAGNAGSISSYAQRILEHRENTDFRLGLLEDADALWTHSHSQAQKTEETSSGPEGTIQTQNPHYSREELNSMTLAEVVQLSAKLQQRIQEVFEELTHQVQEKDSLASELHVRHVAIEQLLKNCSKLPCLQVGRTGTRSHLPMNH</sequence>
<evidence type="ECO:0000250" key="1">
    <source>
        <dbReference type="UniProtKB" id="Q9I8W6"/>
    </source>
</evidence>
<evidence type="ECO:0000255" key="2"/>
<evidence type="ECO:0000256" key="3">
    <source>
        <dbReference type="SAM" id="MobiDB-lite"/>
    </source>
</evidence>
<evidence type="ECO:0000269" key="4">
    <source>
    </source>
</evidence>
<evidence type="ECO:0000305" key="5"/>
<evidence type="ECO:0000312" key="6">
    <source>
        <dbReference type="MGI" id="MGI:1196400"/>
    </source>
</evidence>
<dbReference type="EMBL" id="AK009258">
    <property type="protein sequence ID" value="BAB26175.1"/>
    <property type="molecule type" value="mRNA"/>
</dbReference>
<dbReference type="CCDS" id="CCDS28278.1"/>
<dbReference type="RefSeq" id="NP_001239367.1">
    <property type="nucleotide sequence ID" value="NM_001252438.1"/>
</dbReference>
<dbReference type="RefSeq" id="NP_001239368.1">
    <property type="nucleotide sequence ID" value="NM_001252439.1"/>
</dbReference>
<dbReference type="RefSeq" id="NP_001239369.1">
    <property type="nucleotide sequence ID" value="NM_001252440.1"/>
</dbReference>
<dbReference type="RefSeq" id="NP_080243.3">
    <property type="nucleotide sequence ID" value="NM_025967.4"/>
</dbReference>
<dbReference type="SMR" id="Q9D7G4"/>
<dbReference type="BioGRID" id="211941">
    <property type="interactions" value="3"/>
</dbReference>
<dbReference type="FunCoup" id="Q9D7G4">
    <property type="interactions" value="73"/>
</dbReference>
<dbReference type="IntAct" id="Q9D7G4">
    <property type="interactions" value="2"/>
</dbReference>
<dbReference type="STRING" id="10090.ENSMUSP00000156198"/>
<dbReference type="PhosphoSitePlus" id="Q9D7G4"/>
<dbReference type="PaxDb" id="10090-ENSMUSP00000109858"/>
<dbReference type="ProteomicsDB" id="275553"/>
<dbReference type="Pumba" id="Q9D7G4"/>
<dbReference type="Antibodypedia" id="4857">
    <property type="antibodies" value="82 antibodies from 14 providers"/>
</dbReference>
<dbReference type="DNASU" id="67102"/>
<dbReference type="Ensembl" id="ENSMUST00000114218.2">
    <property type="protein sequence ID" value="ENSMUSP00000109856.2"/>
    <property type="gene ID" value="ENSMUSG00000022864.15"/>
</dbReference>
<dbReference type="Ensembl" id="ENSMUST00000114219.8">
    <property type="protein sequence ID" value="ENSMUSP00000109857.2"/>
    <property type="gene ID" value="ENSMUSG00000022864.15"/>
</dbReference>
<dbReference type="Ensembl" id="ENSMUST00000114220.9">
    <property type="protein sequence ID" value="ENSMUSP00000109858.2"/>
    <property type="gene ID" value="ENSMUSG00000022864.15"/>
</dbReference>
<dbReference type="Ensembl" id="ENSMUST00000231973.2">
    <property type="protein sequence ID" value="ENSMUSP00000156370.2"/>
    <property type="gene ID" value="ENSMUSG00000022864.15"/>
</dbReference>
<dbReference type="Ensembl" id="ENSMUST00000232052.2">
    <property type="protein sequence ID" value="ENSMUSP00000156198.2"/>
    <property type="gene ID" value="ENSMUSG00000022864.15"/>
</dbReference>
<dbReference type="GeneID" id="67102"/>
<dbReference type="KEGG" id="mmu:67102"/>
<dbReference type="UCSC" id="uc007zsr.3">
    <property type="organism name" value="mouse"/>
</dbReference>
<dbReference type="AGR" id="MGI:1196400"/>
<dbReference type="CTD" id="67102"/>
<dbReference type="MGI" id="MGI:1196400">
    <property type="gene designation" value="D16Ertd472e"/>
</dbReference>
<dbReference type="VEuPathDB" id="HostDB:ENSMUSG00000022864"/>
<dbReference type="eggNOG" id="ENOG502QS2B">
    <property type="taxonomic scope" value="Eukaryota"/>
</dbReference>
<dbReference type="GeneTree" id="ENSGT00390000002429"/>
<dbReference type="HOGENOM" id="CLU_059941_0_0_1"/>
<dbReference type="InParanoid" id="Q9D7G4"/>
<dbReference type="OMA" id="NCTKLPW"/>
<dbReference type="OrthoDB" id="10046286at2759"/>
<dbReference type="PhylomeDB" id="Q9D7G4"/>
<dbReference type="TreeFam" id="TF331712"/>
<dbReference type="BioGRID-ORCS" id="67102">
    <property type="hits" value="4 hits in 76 CRISPR screens"/>
</dbReference>
<dbReference type="ChiTaRS" id="D16Ertd472e">
    <property type="organism name" value="mouse"/>
</dbReference>
<dbReference type="PRO" id="PR:Q9D7G4"/>
<dbReference type="Proteomes" id="UP000000589">
    <property type="component" value="Chromosome 16"/>
</dbReference>
<dbReference type="RNAct" id="Q9D7G4">
    <property type="molecule type" value="protein"/>
</dbReference>
<dbReference type="Bgee" id="ENSMUSG00000022864">
    <property type="expression patterns" value="Expressed in spermatid and 279 other cell types or tissues"/>
</dbReference>
<dbReference type="ExpressionAtlas" id="Q9D7G4">
    <property type="expression patterns" value="baseline and differential"/>
</dbReference>
<dbReference type="GO" id="GO:0021895">
    <property type="term" value="P:cerebral cortex neuron differentiation"/>
    <property type="evidence" value="ECO:0000315"/>
    <property type="project" value="UniProtKB"/>
</dbReference>
<dbReference type="GO" id="GO:0060999">
    <property type="term" value="P:positive regulation of dendritic spine development"/>
    <property type="evidence" value="ECO:0000315"/>
    <property type="project" value="UniProtKB"/>
</dbReference>
<dbReference type="InterPro" id="IPR009704">
    <property type="entry name" value="EURL_prot"/>
</dbReference>
<dbReference type="PANTHER" id="PTHR15961">
    <property type="entry name" value="PROTEIN EURL HOMOLOG"/>
    <property type="match status" value="1"/>
</dbReference>
<dbReference type="PANTHER" id="PTHR15961:SF3">
    <property type="entry name" value="PROTEIN EURL HOMOLOG"/>
    <property type="match status" value="1"/>
</dbReference>
<dbReference type="Pfam" id="PF06937">
    <property type="entry name" value="EURL"/>
    <property type="match status" value="1"/>
</dbReference>
<gene>
    <name evidence="1" type="primary">Eurl</name>
    <name evidence="6" type="synonym">D16Ertd472e</name>
</gene>
<name>EURL_MOUSE</name>
<reference key="1">
    <citation type="journal article" date="2005" name="Science">
        <title>The transcriptional landscape of the mammalian genome.</title>
        <authorList>
            <person name="Carninci P."/>
            <person name="Kasukawa T."/>
            <person name="Katayama S."/>
            <person name="Gough J."/>
            <person name="Frith M.C."/>
            <person name="Maeda N."/>
            <person name="Oyama R."/>
            <person name="Ravasi T."/>
            <person name="Lenhard B."/>
            <person name="Wells C."/>
            <person name="Kodzius R."/>
            <person name="Shimokawa K."/>
            <person name="Bajic V.B."/>
            <person name="Brenner S.E."/>
            <person name="Batalov S."/>
            <person name="Forrest A.R."/>
            <person name="Zavolan M."/>
            <person name="Davis M.J."/>
            <person name="Wilming L.G."/>
            <person name="Aidinis V."/>
            <person name="Allen J.E."/>
            <person name="Ambesi-Impiombato A."/>
            <person name="Apweiler R."/>
            <person name="Aturaliya R.N."/>
            <person name="Bailey T.L."/>
            <person name="Bansal M."/>
            <person name="Baxter L."/>
            <person name="Beisel K.W."/>
            <person name="Bersano T."/>
            <person name="Bono H."/>
            <person name="Chalk A.M."/>
            <person name="Chiu K.P."/>
            <person name="Choudhary V."/>
            <person name="Christoffels A."/>
            <person name="Clutterbuck D.R."/>
            <person name="Crowe M.L."/>
            <person name="Dalla E."/>
            <person name="Dalrymple B.P."/>
            <person name="de Bono B."/>
            <person name="Della Gatta G."/>
            <person name="di Bernardo D."/>
            <person name="Down T."/>
            <person name="Engstrom P."/>
            <person name="Fagiolini M."/>
            <person name="Faulkner G."/>
            <person name="Fletcher C.F."/>
            <person name="Fukushima T."/>
            <person name="Furuno M."/>
            <person name="Futaki S."/>
            <person name="Gariboldi M."/>
            <person name="Georgii-Hemming P."/>
            <person name="Gingeras T.R."/>
            <person name="Gojobori T."/>
            <person name="Green R.E."/>
            <person name="Gustincich S."/>
            <person name="Harbers M."/>
            <person name="Hayashi Y."/>
            <person name="Hensch T.K."/>
            <person name="Hirokawa N."/>
            <person name="Hill D."/>
            <person name="Huminiecki L."/>
            <person name="Iacono M."/>
            <person name="Ikeo K."/>
            <person name="Iwama A."/>
            <person name="Ishikawa T."/>
            <person name="Jakt M."/>
            <person name="Kanapin A."/>
            <person name="Katoh M."/>
            <person name="Kawasawa Y."/>
            <person name="Kelso J."/>
            <person name="Kitamura H."/>
            <person name="Kitano H."/>
            <person name="Kollias G."/>
            <person name="Krishnan S.P."/>
            <person name="Kruger A."/>
            <person name="Kummerfeld S.K."/>
            <person name="Kurochkin I.V."/>
            <person name="Lareau L.F."/>
            <person name="Lazarevic D."/>
            <person name="Lipovich L."/>
            <person name="Liu J."/>
            <person name="Liuni S."/>
            <person name="McWilliam S."/>
            <person name="Madan Babu M."/>
            <person name="Madera M."/>
            <person name="Marchionni L."/>
            <person name="Matsuda H."/>
            <person name="Matsuzawa S."/>
            <person name="Miki H."/>
            <person name="Mignone F."/>
            <person name="Miyake S."/>
            <person name="Morris K."/>
            <person name="Mottagui-Tabar S."/>
            <person name="Mulder N."/>
            <person name="Nakano N."/>
            <person name="Nakauchi H."/>
            <person name="Ng P."/>
            <person name="Nilsson R."/>
            <person name="Nishiguchi S."/>
            <person name="Nishikawa S."/>
            <person name="Nori F."/>
            <person name="Ohara O."/>
            <person name="Okazaki Y."/>
            <person name="Orlando V."/>
            <person name="Pang K.C."/>
            <person name="Pavan W.J."/>
            <person name="Pavesi G."/>
            <person name="Pesole G."/>
            <person name="Petrovsky N."/>
            <person name="Piazza S."/>
            <person name="Reed J."/>
            <person name="Reid J.F."/>
            <person name="Ring B.Z."/>
            <person name="Ringwald M."/>
            <person name="Rost B."/>
            <person name="Ruan Y."/>
            <person name="Salzberg S.L."/>
            <person name="Sandelin A."/>
            <person name="Schneider C."/>
            <person name="Schoenbach C."/>
            <person name="Sekiguchi K."/>
            <person name="Semple C.A."/>
            <person name="Seno S."/>
            <person name="Sessa L."/>
            <person name="Sheng Y."/>
            <person name="Shibata Y."/>
            <person name="Shimada H."/>
            <person name="Shimada K."/>
            <person name="Silva D."/>
            <person name="Sinclair B."/>
            <person name="Sperling S."/>
            <person name="Stupka E."/>
            <person name="Sugiura K."/>
            <person name="Sultana R."/>
            <person name="Takenaka Y."/>
            <person name="Taki K."/>
            <person name="Tammoja K."/>
            <person name="Tan S.L."/>
            <person name="Tang S."/>
            <person name="Taylor M.S."/>
            <person name="Tegner J."/>
            <person name="Teichmann S.A."/>
            <person name="Ueda H.R."/>
            <person name="van Nimwegen E."/>
            <person name="Verardo R."/>
            <person name="Wei C.L."/>
            <person name="Yagi K."/>
            <person name="Yamanishi H."/>
            <person name="Zabarovsky E."/>
            <person name="Zhu S."/>
            <person name="Zimmer A."/>
            <person name="Hide W."/>
            <person name="Bult C."/>
            <person name="Grimmond S.M."/>
            <person name="Teasdale R.D."/>
            <person name="Liu E.T."/>
            <person name="Brusic V."/>
            <person name="Quackenbush J."/>
            <person name="Wahlestedt C."/>
            <person name="Mattick J.S."/>
            <person name="Hume D.A."/>
            <person name="Kai C."/>
            <person name="Sasaki D."/>
            <person name="Tomaru Y."/>
            <person name="Fukuda S."/>
            <person name="Kanamori-Katayama M."/>
            <person name="Suzuki M."/>
            <person name="Aoki J."/>
            <person name="Arakawa T."/>
            <person name="Iida J."/>
            <person name="Imamura K."/>
            <person name="Itoh M."/>
            <person name="Kato T."/>
            <person name="Kawaji H."/>
            <person name="Kawagashira N."/>
            <person name="Kawashima T."/>
            <person name="Kojima M."/>
            <person name="Kondo S."/>
            <person name="Konno H."/>
            <person name="Nakano K."/>
            <person name="Ninomiya N."/>
            <person name="Nishio T."/>
            <person name="Okada M."/>
            <person name="Plessy C."/>
            <person name="Shibata K."/>
            <person name="Shiraki T."/>
            <person name="Suzuki S."/>
            <person name="Tagami M."/>
            <person name="Waki K."/>
            <person name="Watahiki A."/>
            <person name="Okamura-Oho Y."/>
            <person name="Suzuki H."/>
            <person name="Kawai J."/>
            <person name="Hayashizaki Y."/>
        </authorList>
    </citation>
    <scope>NUCLEOTIDE SEQUENCE [LARGE SCALE MRNA]</scope>
    <source>
        <strain>C57BL/6J</strain>
        <tissue>Tongue</tissue>
    </source>
</reference>
<reference key="2">
    <citation type="journal article" date="2016" name="Sci. Rep.">
        <title>The HSA21 gene EURL/C21ORF91 controls neurogenesis within the cerebral cortex and is implicated in the pathogenesis of Down Syndrome.</title>
        <authorList>
            <person name="Li S.S."/>
            <person name="Qu Z."/>
            <person name="Haas M."/>
            <person name="Ngo L."/>
            <person name="Heo Y.J."/>
            <person name="Kang H.J."/>
            <person name="Britto J.M."/>
            <person name="Cullen H.D."/>
            <person name="Vanyai H.K."/>
            <person name="Tan S.S."/>
            <person name="Chan-Ling T."/>
            <person name="Gunnersen J.M."/>
            <person name="Heng J.I."/>
        </authorList>
    </citation>
    <scope>FUNCTION</scope>
    <scope>INTERACTION WITH CCDC85B</scope>
    <scope>TISSUE SPECIFICITY</scope>
    <scope>DEVELOPMENTAL STAGE</scope>
</reference>
<feature type="chain" id="PRO_0000087078" description="Protein EURL homolog">
    <location>
        <begin position="1"/>
        <end position="290"/>
    </location>
</feature>
<feature type="region of interest" description="Disordered" evidence="3">
    <location>
        <begin position="185"/>
        <end position="206"/>
    </location>
</feature>
<feature type="coiled-coil region" evidence="2">
    <location>
        <begin position="228"/>
        <end position="251"/>
    </location>
</feature>
<protein>
    <recommendedName>
        <fullName evidence="5">Protein EURL homolog</fullName>
    </recommendedName>
</protein>
<accession>Q9D7G4</accession>
<proteinExistence type="evidence at protein level"/>